<keyword id="KW-1005">Bacterial flagellum biogenesis</keyword>
<keyword id="KW-0961">Cell wall biogenesis/degradation</keyword>
<keyword id="KW-0326">Glycosidase</keyword>
<keyword id="KW-0378">Hydrolase</keyword>
<keyword id="KW-0574">Periplasm</keyword>
<dbReference type="EC" id="3.2.1.-"/>
<dbReference type="EMBL" id="U12817">
    <property type="protein sequence ID" value="AAD42920.1"/>
    <property type="molecule type" value="Genomic_DNA"/>
</dbReference>
<dbReference type="EMBL" id="BA000031">
    <property type="protein sequence ID" value="BAC59047.1"/>
    <property type="molecule type" value="Genomic_DNA"/>
</dbReference>
<dbReference type="RefSeq" id="NP_797163.1">
    <property type="nucleotide sequence ID" value="NC_004603.1"/>
</dbReference>
<dbReference type="RefSeq" id="WP_005454015.1">
    <property type="nucleotide sequence ID" value="NC_004603.1"/>
</dbReference>
<dbReference type="SMR" id="Q9X9J3"/>
<dbReference type="CAZy" id="GH73">
    <property type="family name" value="Glycoside Hydrolase Family 73"/>
</dbReference>
<dbReference type="GeneID" id="1188281"/>
<dbReference type="KEGG" id="vpa:VP0784"/>
<dbReference type="PATRIC" id="fig|223926.6.peg.749"/>
<dbReference type="eggNOG" id="COG1705">
    <property type="taxonomic scope" value="Bacteria"/>
</dbReference>
<dbReference type="eggNOG" id="COG3951">
    <property type="taxonomic scope" value="Bacteria"/>
</dbReference>
<dbReference type="HOGENOM" id="CLU_013771_3_0_6"/>
<dbReference type="Proteomes" id="UP000002493">
    <property type="component" value="Chromosome 1"/>
</dbReference>
<dbReference type="GO" id="GO:0042597">
    <property type="term" value="C:periplasmic space"/>
    <property type="evidence" value="ECO:0007669"/>
    <property type="project" value="UniProtKB-SubCell"/>
</dbReference>
<dbReference type="GO" id="GO:0004040">
    <property type="term" value="F:amidase activity"/>
    <property type="evidence" value="ECO:0007669"/>
    <property type="project" value="InterPro"/>
</dbReference>
<dbReference type="GO" id="GO:0016798">
    <property type="term" value="F:hydrolase activity, acting on glycosyl bonds"/>
    <property type="evidence" value="ECO:0007669"/>
    <property type="project" value="UniProtKB-KW"/>
</dbReference>
<dbReference type="GO" id="GO:0044780">
    <property type="term" value="P:bacterial-type flagellum assembly"/>
    <property type="evidence" value="ECO:0007669"/>
    <property type="project" value="InterPro"/>
</dbReference>
<dbReference type="GO" id="GO:0071973">
    <property type="term" value="P:bacterial-type flagellum-dependent cell motility"/>
    <property type="evidence" value="ECO:0007669"/>
    <property type="project" value="TreeGrafter"/>
</dbReference>
<dbReference type="GO" id="GO:0071555">
    <property type="term" value="P:cell wall organization"/>
    <property type="evidence" value="ECO:0007669"/>
    <property type="project" value="UniProtKB-KW"/>
</dbReference>
<dbReference type="FunFam" id="2.10.70.40:FF:000001">
    <property type="entry name" value="Flagellar assembly peptidoglycan hydrolase FlgJ"/>
    <property type="match status" value="1"/>
</dbReference>
<dbReference type="Gene3D" id="1.10.530.10">
    <property type="match status" value="1"/>
</dbReference>
<dbReference type="Gene3D" id="2.10.70.40">
    <property type="entry name" value="peptidoglycan hydrolase"/>
    <property type="match status" value="1"/>
</dbReference>
<dbReference type="InterPro" id="IPR019301">
    <property type="entry name" value="Flagellar_prot_FlgJ_N"/>
</dbReference>
<dbReference type="InterPro" id="IPR013377">
    <property type="entry name" value="FlgJ"/>
</dbReference>
<dbReference type="InterPro" id="IPR051056">
    <property type="entry name" value="Glycosyl_Hydrolase_73"/>
</dbReference>
<dbReference type="InterPro" id="IPR002901">
    <property type="entry name" value="MGlyc_endo_b_GlcNAc-like_dom"/>
</dbReference>
<dbReference type="NCBIfam" id="TIGR02541">
    <property type="entry name" value="flagell_FlgJ"/>
    <property type="match status" value="1"/>
</dbReference>
<dbReference type="PANTHER" id="PTHR33308">
    <property type="entry name" value="PEPTIDOGLYCAN HYDROLASE FLGJ"/>
    <property type="match status" value="1"/>
</dbReference>
<dbReference type="PANTHER" id="PTHR33308:SF9">
    <property type="entry name" value="PEPTIDOGLYCAN HYDROLASE FLGJ"/>
    <property type="match status" value="1"/>
</dbReference>
<dbReference type="Pfam" id="PF01832">
    <property type="entry name" value="Glucosaminidase"/>
    <property type="match status" value="1"/>
</dbReference>
<dbReference type="Pfam" id="PF10135">
    <property type="entry name" value="Rod-binding"/>
    <property type="match status" value="1"/>
</dbReference>
<dbReference type="PRINTS" id="PR01002">
    <property type="entry name" value="FLGFLGJ"/>
</dbReference>
<dbReference type="SMART" id="SM00047">
    <property type="entry name" value="LYZ2"/>
    <property type="match status" value="1"/>
</dbReference>
<name>FLGJ_VIBPA</name>
<comment type="function">
    <text evidence="1">Flagellum-specific muramidase which hydrolyzes the peptidoglycan layer to assemble the rod structure in the periplasmic space.</text>
</comment>
<comment type="subcellular location">
    <subcellularLocation>
        <location evidence="1">Periplasm</location>
    </subcellularLocation>
</comment>
<comment type="miscellaneous">
    <text>Probably exported via the flagellum-specific export pathway.</text>
</comment>
<comment type="similarity">
    <text evidence="3">In the N-terminal section; belongs to the FlgJ family.</text>
</comment>
<comment type="similarity">
    <text evidence="3">In the C-terminal section; belongs to the glycosyl hydrolase 73 family.</text>
</comment>
<accession>Q9X9J3</accession>
<proteinExistence type="inferred from homology"/>
<gene>
    <name type="primary">flgJ</name>
    <name type="ordered locus">VP0784</name>
</gene>
<reference key="1">
    <citation type="submission" date="1999-04" db="EMBL/GenBank/DDBJ databases">
        <title>Polar flagellar region I.</title>
        <authorList>
            <person name="McCarter L.L."/>
        </authorList>
    </citation>
    <scope>NUCLEOTIDE SEQUENCE [GENOMIC DNA]</scope>
    <source>
        <strain>BB22</strain>
    </source>
</reference>
<reference key="2">
    <citation type="journal article" date="2003" name="Lancet">
        <title>Genome sequence of Vibrio parahaemolyticus: a pathogenic mechanism distinct from that of V. cholerae.</title>
        <authorList>
            <person name="Makino K."/>
            <person name="Oshima K."/>
            <person name="Kurokawa K."/>
            <person name="Yokoyama K."/>
            <person name="Uda T."/>
            <person name="Tagomori K."/>
            <person name="Iijima Y."/>
            <person name="Najima M."/>
            <person name="Nakano M."/>
            <person name="Yamashita A."/>
            <person name="Kubota Y."/>
            <person name="Kimura S."/>
            <person name="Yasunaga T."/>
            <person name="Honda T."/>
            <person name="Shinagawa H."/>
            <person name="Hattori M."/>
            <person name="Iida T."/>
        </authorList>
    </citation>
    <scope>NUCLEOTIDE SEQUENCE [LARGE SCALE GENOMIC DNA]</scope>
    <source>
        <strain>RIMD 2210633</strain>
    </source>
</reference>
<organism>
    <name type="scientific">Vibrio parahaemolyticus serotype O3:K6 (strain RIMD 2210633)</name>
    <dbReference type="NCBI Taxonomy" id="223926"/>
    <lineage>
        <taxon>Bacteria</taxon>
        <taxon>Pseudomonadati</taxon>
        <taxon>Pseudomonadota</taxon>
        <taxon>Gammaproteobacteria</taxon>
        <taxon>Vibrionales</taxon>
        <taxon>Vibrionaceae</taxon>
        <taxon>Vibrio</taxon>
    </lineage>
</organism>
<evidence type="ECO:0000250" key="1"/>
<evidence type="ECO:0000255" key="2"/>
<evidence type="ECO:0000305" key="3"/>
<sequence length="308" mass="34524">MMKNPNDIGFIHDISSLDSLRQKAVKEGKDGEQEALHAAARQFESIFTSMMLKSMREANEGFESNIMNSQNEKFYRQMLDEQMASELSANGSMGLADMIVAQLTAGQGNDKSETAMRDAANSAVEYRRVDPKKAREIEKRLIESGELSRTSHTPAKFDSPESFVNSMKPYAEKAAKALGVEPSLLLAQAALETGWGQKVVQNARGSSNNLFNIKADRSWQGDKVTTQTLEFHDNTPVKETAAFRSYSNYQDSFNDYVRFLNDNPRYETALQQRGDSESFIRGIHRAGYATDPTYADKVLQVKQKIESM</sequence>
<feature type="chain" id="PRO_0000165710" description="Peptidoglycan hydrolase FlgJ">
    <location>
        <begin position="1"/>
        <end position="308"/>
    </location>
</feature>
<feature type="region of interest" description="Catalytic">
    <location>
        <begin position="159"/>
        <end position="308"/>
    </location>
</feature>
<feature type="active site" evidence="2">
    <location>
        <position position="230"/>
    </location>
</feature>
<feature type="active site" evidence="2">
    <location>
        <position position="255"/>
    </location>
</feature>
<protein>
    <recommendedName>
        <fullName>Peptidoglycan hydrolase FlgJ</fullName>
        <ecNumber>3.2.1.-</ecNumber>
    </recommendedName>
    <alternativeName>
        <fullName>Muramidase FlgJ</fullName>
    </alternativeName>
</protein>